<reference key="1">
    <citation type="journal article" date="2004" name="Nat. Genet.">
        <title>Complete sequencing and characterization of 21,243 full-length human cDNAs.</title>
        <authorList>
            <person name="Ota T."/>
            <person name="Suzuki Y."/>
            <person name="Nishikawa T."/>
            <person name="Otsuki T."/>
            <person name="Sugiyama T."/>
            <person name="Irie R."/>
            <person name="Wakamatsu A."/>
            <person name="Hayashi K."/>
            <person name="Sato H."/>
            <person name="Nagai K."/>
            <person name="Kimura K."/>
            <person name="Makita H."/>
            <person name="Sekine M."/>
            <person name="Obayashi M."/>
            <person name="Nishi T."/>
            <person name="Shibahara T."/>
            <person name="Tanaka T."/>
            <person name="Ishii S."/>
            <person name="Yamamoto J."/>
            <person name="Saito K."/>
            <person name="Kawai Y."/>
            <person name="Isono Y."/>
            <person name="Nakamura Y."/>
            <person name="Nagahari K."/>
            <person name="Murakami K."/>
            <person name="Yasuda T."/>
            <person name="Iwayanagi T."/>
            <person name="Wagatsuma M."/>
            <person name="Shiratori A."/>
            <person name="Sudo H."/>
            <person name="Hosoiri T."/>
            <person name="Kaku Y."/>
            <person name="Kodaira H."/>
            <person name="Kondo H."/>
            <person name="Sugawara M."/>
            <person name="Takahashi M."/>
            <person name="Kanda K."/>
            <person name="Yokoi T."/>
            <person name="Furuya T."/>
            <person name="Kikkawa E."/>
            <person name="Omura Y."/>
            <person name="Abe K."/>
            <person name="Kamihara K."/>
            <person name="Katsuta N."/>
            <person name="Sato K."/>
            <person name="Tanikawa M."/>
            <person name="Yamazaki M."/>
            <person name="Ninomiya K."/>
            <person name="Ishibashi T."/>
            <person name="Yamashita H."/>
            <person name="Murakawa K."/>
            <person name="Fujimori K."/>
            <person name="Tanai H."/>
            <person name="Kimata M."/>
            <person name="Watanabe M."/>
            <person name="Hiraoka S."/>
            <person name="Chiba Y."/>
            <person name="Ishida S."/>
            <person name="Ono Y."/>
            <person name="Takiguchi S."/>
            <person name="Watanabe S."/>
            <person name="Yosida M."/>
            <person name="Hotuta T."/>
            <person name="Kusano J."/>
            <person name="Kanehori K."/>
            <person name="Takahashi-Fujii A."/>
            <person name="Hara H."/>
            <person name="Tanase T.-O."/>
            <person name="Nomura Y."/>
            <person name="Togiya S."/>
            <person name="Komai F."/>
            <person name="Hara R."/>
            <person name="Takeuchi K."/>
            <person name="Arita M."/>
            <person name="Imose N."/>
            <person name="Musashino K."/>
            <person name="Yuuki H."/>
            <person name="Oshima A."/>
            <person name="Sasaki N."/>
            <person name="Aotsuka S."/>
            <person name="Yoshikawa Y."/>
            <person name="Matsunawa H."/>
            <person name="Ichihara T."/>
            <person name="Shiohata N."/>
            <person name="Sano S."/>
            <person name="Moriya S."/>
            <person name="Momiyama H."/>
            <person name="Satoh N."/>
            <person name="Takami S."/>
            <person name="Terashima Y."/>
            <person name="Suzuki O."/>
            <person name="Nakagawa S."/>
            <person name="Senoh A."/>
            <person name="Mizoguchi H."/>
            <person name="Goto Y."/>
            <person name="Shimizu F."/>
            <person name="Wakebe H."/>
            <person name="Hishigaki H."/>
            <person name="Watanabe T."/>
            <person name="Sugiyama A."/>
            <person name="Takemoto M."/>
            <person name="Kawakami B."/>
            <person name="Yamazaki M."/>
            <person name="Watanabe K."/>
            <person name="Kumagai A."/>
            <person name="Itakura S."/>
            <person name="Fukuzumi Y."/>
            <person name="Fujimori Y."/>
            <person name="Komiyama M."/>
            <person name="Tashiro H."/>
            <person name="Tanigami A."/>
            <person name="Fujiwara T."/>
            <person name="Ono T."/>
            <person name="Yamada K."/>
            <person name="Fujii Y."/>
            <person name="Ozaki K."/>
            <person name="Hirao M."/>
            <person name="Ohmori Y."/>
            <person name="Kawabata A."/>
            <person name="Hikiji T."/>
            <person name="Kobatake N."/>
            <person name="Inagaki H."/>
            <person name="Ikema Y."/>
            <person name="Okamoto S."/>
            <person name="Okitani R."/>
            <person name="Kawakami T."/>
            <person name="Noguchi S."/>
            <person name="Itoh T."/>
            <person name="Shigeta K."/>
            <person name="Senba T."/>
            <person name="Matsumura K."/>
            <person name="Nakajima Y."/>
            <person name="Mizuno T."/>
            <person name="Morinaga M."/>
            <person name="Sasaki M."/>
            <person name="Togashi T."/>
            <person name="Oyama M."/>
            <person name="Hata H."/>
            <person name="Watanabe M."/>
            <person name="Komatsu T."/>
            <person name="Mizushima-Sugano J."/>
            <person name="Satoh T."/>
            <person name="Shirai Y."/>
            <person name="Takahashi Y."/>
            <person name="Nakagawa K."/>
            <person name="Okumura K."/>
            <person name="Nagase T."/>
            <person name="Nomura N."/>
            <person name="Kikuchi H."/>
            <person name="Masuho Y."/>
            <person name="Yamashita R."/>
            <person name="Nakai K."/>
            <person name="Yada T."/>
            <person name="Nakamura Y."/>
            <person name="Ohara O."/>
            <person name="Isogai T."/>
            <person name="Sugano S."/>
        </authorList>
    </citation>
    <scope>NUCLEOTIDE SEQUENCE [LARGE SCALE MRNA] (ISOFORM 2)</scope>
</reference>
<reference key="2">
    <citation type="journal article" date="2006" name="Nature">
        <title>The DNA sequence, annotation and analysis of human chromosome 3.</title>
        <authorList>
            <person name="Muzny D.M."/>
            <person name="Scherer S.E."/>
            <person name="Kaul R."/>
            <person name="Wang J."/>
            <person name="Yu J."/>
            <person name="Sudbrak R."/>
            <person name="Buhay C.J."/>
            <person name="Chen R."/>
            <person name="Cree A."/>
            <person name="Ding Y."/>
            <person name="Dugan-Rocha S."/>
            <person name="Gill R."/>
            <person name="Gunaratne P."/>
            <person name="Harris R.A."/>
            <person name="Hawes A.C."/>
            <person name="Hernandez J."/>
            <person name="Hodgson A.V."/>
            <person name="Hume J."/>
            <person name="Jackson A."/>
            <person name="Khan Z.M."/>
            <person name="Kovar-Smith C."/>
            <person name="Lewis L.R."/>
            <person name="Lozado R.J."/>
            <person name="Metzker M.L."/>
            <person name="Milosavljevic A."/>
            <person name="Miner G.R."/>
            <person name="Morgan M.B."/>
            <person name="Nazareth L.V."/>
            <person name="Scott G."/>
            <person name="Sodergren E."/>
            <person name="Song X.-Z."/>
            <person name="Steffen D."/>
            <person name="Wei S."/>
            <person name="Wheeler D.A."/>
            <person name="Wright M.W."/>
            <person name="Worley K.C."/>
            <person name="Yuan Y."/>
            <person name="Zhang Z."/>
            <person name="Adams C.Q."/>
            <person name="Ansari-Lari M.A."/>
            <person name="Ayele M."/>
            <person name="Brown M.J."/>
            <person name="Chen G."/>
            <person name="Chen Z."/>
            <person name="Clendenning J."/>
            <person name="Clerc-Blankenburg K.P."/>
            <person name="Chen R."/>
            <person name="Chen Z."/>
            <person name="Davis C."/>
            <person name="Delgado O."/>
            <person name="Dinh H.H."/>
            <person name="Dong W."/>
            <person name="Draper H."/>
            <person name="Ernst S."/>
            <person name="Fu G."/>
            <person name="Gonzalez-Garay M.L."/>
            <person name="Garcia D.K."/>
            <person name="Gillett W."/>
            <person name="Gu J."/>
            <person name="Hao B."/>
            <person name="Haugen E."/>
            <person name="Havlak P."/>
            <person name="He X."/>
            <person name="Hennig S."/>
            <person name="Hu S."/>
            <person name="Huang W."/>
            <person name="Jackson L.R."/>
            <person name="Jacob L.S."/>
            <person name="Kelly S.H."/>
            <person name="Kube M."/>
            <person name="Levy R."/>
            <person name="Li Z."/>
            <person name="Liu B."/>
            <person name="Liu J."/>
            <person name="Liu W."/>
            <person name="Lu J."/>
            <person name="Maheshwari M."/>
            <person name="Nguyen B.-V."/>
            <person name="Okwuonu G.O."/>
            <person name="Palmeiri A."/>
            <person name="Pasternak S."/>
            <person name="Perez L.M."/>
            <person name="Phelps K.A."/>
            <person name="Plopper F.J."/>
            <person name="Qiang B."/>
            <person name="Raymond C."/>
            <person name="Rodriguez R."/>
            <person name="Saenphimmachak C."/>
            <person name="Santibanez J."/>
            <person name="Shen H."/>
            <person name="Shen Y."/>
            <person name="Subramanian S."/>
            <person name="Tabor P.E."/>
            <person name="Verduzco D."/>
            <person name="Waldron L."/>
            <person name="Wang J."/>
            <person name="Wang J."/>
            <person name="Wang Q."/>
            <person name="Williams G.A."/>
            <person name="Wong G.K.-S."/>
            <person name="Yao Z."/>
            <person name="Zhang J."/>
            <person name="Zhang X."/>
            <person name="Zhao G."/>
            <person name="Zhou J."/>
            <person name="Zhou Y."/>
            <person name="Nelson D."/>
            <person name="Lehrach H."/>
            <person name="Reinhardt R."/>
            <person name="Naylor S.L."/>
            <person name="Yang H."/>
            <person name="Olson M."/>
            <person name="Weinstock G."/>
            <person name="Gibbs R.A."/>
        </authorList>
    </citation>
    <scope>NUCLEOTIDE SEQUENCE [LARGE SCALE GENOMIC DNA]</scope>
</reference>
<reference key="3">
    <citation type="submission" date="2004-06" db="EMBL/GenBank/DDBJ databases">
        <title>Cloning of human full open reading frames in Gateway(TM) system entry vector (pDONR201).</title>
        <authorList>
            <person name="Ebert L."/>
            <person name="Schick M."/>
            <person name="Neubert P."/>
            <person name="Schatten R."/>
            <person name="Henze S."/>
            <person name="Korn B."/>
        </authorList>
    </citation>
    <scope>NUCLEOTIDE SEQUENCE [LARGE SCALE MRNA] OF 1-65 (ISOFORM 1/2/3)</scope>
</reference>
<reference key="4">
    <citation type="submission" date="2005-04" db="EMBL/GenBank/DDBJ databases">
        <title>Exhaustive RT-PCR and sequencing of all novel TWINSCAN predictions in human.</title>
        <authorList>
            <person name="Stevens M."/>
            <person name="Wei C."/>
            <person name="Gross S.S."/>
            <person name="McPherson J."/>
            <person name="Brent M.R."/>
        </authorList>
    </citation>
    <scope>NUCLEOTIDE SEQUENCE [LARGE SCALE MRNA] OF 52-244 (ISOFORM 1/2/3)</scope>
</reference>
<protein>
    <recommendedName>
        <fullName>Protein ANKUB1</fullName>
    </recommendedName>
    <alternativeName>
        <fullName>Ankyrin repeat and ubiquitin domain-containing 1</fullName>
    </alternativeName>
</protein>
<sequence length="502" mass="56600">MRIFIAFEGSFEPFDVSADETVEVVKLMIKDYFHIPLSEDKQGRRYLELMYAGAALKDSWSLADVGISFCSTLKCFVKEEDKPTLYVFNAVTQDTMPVMESISLLDKTVSDLRTLVTLRCGLPVSVYCLRTPRGLEMYDCNTLKDYQTDIGTTLRLDVWDGWKEFLMGCLLGQKLKVQRYLSKEGPVLKYQKRVALYIAAFCGYIELTEWALKQGARPHEAVGVHPYRAWCHEALHADVSKCPIHAAAEAGQLLILKAFVNYSVLCLECKNAAGQTPLTIVFKHKHKDCVLYLLSKMWSTVSFPKISVPMRIYIKIKQWILRAQSHSLHKSQFCGARVFGAKVGDTVMVDGFTKPKMTSKSWHKAGNSDSQSIVLKLPSLSKQTASSKPVNPLAISQPDTRKQALKFHPLVNASSFSELQKHQQQNQKKITATARKKEKLIKNTYLPQVPLPPVSRVGYSHPSFFYATPSADFLLKSSFSSFLEHSGKTPWENAIYCLAVAR</sequence>
<name>ANKUB_HUMAN</name>
<comment type="alternative products">
    <event type="alternative splicing"/>
    <isoform>
        <id>A6NFN9-2</id>
        <name>2</name>
        <sequence type="displayed"/>
    </isoform>
    <isoform>
        <id>A6NFN9-1</id>
        <name>1</name>
        <sequence type="described" ref="VSP_059614 VSP_059615"/>
    </isoform>
    <isoform>
        <id>A6NFN9-3</id>
        <name>3</name>
        <sequence type="described" ref="VSP_059616"/>
    </isoform>
</comment>
<accession>A6NFN9</accession>
<accession>B4E2N8</accession>
<accession>E9PHT4</accession>
<feature type="chain" id="PRO_0000344463" description="Protein ANKUB1">
    <location>
        <begin position="1"/>
        <end position="502"/>
    </location>
</feature>
<feature type="splice variant" id="VSP_059614" description="In isoform 1.">
    <original>VNASSFSELQKHQQ</original>
    <variation>KGESPKADKSSGIM</variation>
    <location>
        <begin position="411"/>
        <end position="424"/>
    </location>
</feature>
<feature type="splice variant" id="VSP_059615" description="In isoform 1.">
    <location>
        <begin position="425"/>
        <end position="502"/>
    </location>
</feature>
<feature type="splice variant" id="VSP_059616" description="In isoform 3.">
    <original>R</original>
    <variation>SAFKEKRWLQQLEIARVLAKKSISNLTTRGGLTACENSLETVL</variation>
    <location>
        <position position="502"/>
    </location>
</feature>
<feature type="sequence variant" id="VAR_045621" description="In dbSNP:rs7645720.">
    <original>R</original>
    <variation>W</variation>
    <location>
        <position position="217"/>
    </location>
</feature>
<feature type="sequence variant" id="VAR_045622" description="In dbSNP:rs3821406.">
    <original>I</original>
    <variation>M</variation>
    <location>
        <position position="306"/>
    </location>
</feature>
<feature type="sequence variant" id="VAR_045623" description="In dbSNP:rs7610425.">
    <original>S</original>
    <variation>G</variation>
    <location>
        <position position="386"/>
    </location>
</feature>
<feature type="sequence conflict" description="In Ref. 4; DN831909." evidence="1" ref="4">
    <original>D</original>
    <variation>H</variation>
    <location>
        <position position="81"/>
    </location>
</feature>
<feature type="sequence conflict" description="In Ref. 4; DN831909." evidence="1" ref="4">
    <original>Q</original>
    <variation>L</variation>
    <location>
        <position position="173"/>
    </location>
</feature>
<feature type="sequence conflict" description="In Ref. 4; DN831909." evidence="1" ref="4">
    <original>V</original>
    <variation>K</variation>
    <location>
        <position position="177"/>
    </location>
</feature>
<feature type="sequence conflict" description="In Ref. 4; DN831909." evidence="1" ref="4">
    <original>VG</original>
    <variation>NK</variation>
    <location>
        <begin position="222"/>
        <end position="223"/>
    </location>
</feature>
<gene>
    <name type="primary">ANKUB1</name>
    <name type="synonym">C3orf16</name>
</gene>
<organism>
    <name type="scientific">Homo sapiens</name>
    <name type="common">Human</name>
    <dbReference type="NCBI Taxonomy" id="9606"/>
    <lineage>
        <taxon>Eukaryota</taxon>
        <taxon>Metazoa</taxon>
        <taxon>Chordata</taxon>
        <taxon>Craniata</taxon>
        <taxon>Vertebrata</taxon>
        <taxon>Euteleostomi</taxon>
        <taxon>Mammalia</taxon>
        <taxon>Eutheria</taxon>
        <taxon>Euarchontoglires</taxon>
        <taxon>Primates</taxon>
        <taxon>Haplorrhini</taxon>
        <taxon>Catarrhini</taxon>
        <taxon>Hominidae</taxon>
        <taxon>Homo</taxon>
    </lineage>
</organism>
<dbReference type="EMBL" id="AK027233">
    <property type="status" value="NOT_ANNOTATED_CDS"/>
    <property type="molecule type" value="mRNA"/>
</dbReference>
<dbReference type="EMBL" id="AK098078">
    <property type="status" value="NOT_ANNOTATED_CDS"/>
    <property type="molecule type" value="mRNA"/>
</dbReference>
<dbReference type="EMBL" id="AK304359">
    <property type="protein sequence ID" value="BAG65200.1"/>
    <property type="molecule type" value="mRNA"/>
</dbReference>
<dbReference type="EMBL" id="AC069216">
    <property type="status" value="NOT_ANNOTATED_CDS"/>
    <property type="molecule type" value="Genomic_DNA"/>
</dbReference>
<dbReference type="EMBL" id="AC117395">
    <property type="status" value="NOT_ANNOTATED_CDS"/>
    <property type="molecule type" value="Genomic_DNA"/>
</dbReference>
<dbReference type="EMBL" id="CR737646">
    <property type="status" value="NOT_ANNOTATED_CDS"/>
    <property type="molecule type" value="mRNA"/>
</dbReference>
<dbReference type="EMBL" id="DN831909">
    <property type="status" value="NOT_ANNOTATED_CDS"/>
    <property type="molecule type" value="mRNA"/>
</dbReference>
<dbReference type="CCDS" id="CCDS82857.1">
    <molecule id="A6NFN9-2"/>
</dbReference>
<dbReference type="RefSeq" id="NP_001138432.1">
    <molecule id="A6NFN9-3"/>
    <property type="nucleotide sequence ID" value="NM_001144960.3"/>
</dbReference>
<dbReference type="RefSeq" id="NP_001302435.1">
    <molecule id="A6NFN9-2"/>
    <property type="nucleotide sequence ID" value="NM_001315506.2"/>
</dbReference>
<dbReference type="SMR" id="A6NFN9"/>
<dbReference type="BioGRID" id="133009">
    <property type="interactions" value="1"/>
</dbReference>
<dbReference type="FunCoup" id="A6NFN9">
    <property type="interactions" value="38"/>
</dbReference>
<dbReference type="STRING" id="9606.ENSP00000417635"/>
<dbReference type="GlyGen" id="A6NFN9">
    <property type="glycosylation" value="1 site, 1 O-linked glycan (1 site)"/>
</dbReference>
<dbReference type="iPTMnet" id="A6NFN9"/>
<dbReference type="PhosphoSitePlus" id="A6NFN9"/>
<dbReference type="BioMuta" id="ANKUB1"/>
<dbReference type="jPOST" id="A6NFN9"/>
<dbReference type="MassIVE" id="A6NFN9"/>
<dbReference type="PaxDb" id="9606-ENSP00000387907"/>
<dbReference type="PeptideAtlas" id="A6NFN9"/>
<dbReference type="Antibodypedia" id="64962">
    <property type="antibodies" value="4 antibodies from 4 providers"/>
</dbReference>
<dbReference type="DNASU" id="389161"/>
<dbReference type="Ensembl" id="ENST00000446160.7">
    <molecule id="A6NFN9-3"/>
    <property type="protein sequence ID" value="ENSP00000387907.1"/>
    <property type="gene ID" value="ENSG00000206199.11"/>
</dbReference>
<dbReference type="Ensembl" id="ENST00000462519.3">
    <molecule id="A6NFN9-2"/>
    <property type="protein sequence ID" value="ENSP00000417635.2"/>
    <property type="gene ID" value="ENSG00000206199.11"/>
</dbReference>
<dbReference type="GeneID" id="389161"/>
<dbReference type="KEGG" id="hsa:389161"/>
<dbReference type="MANE-Select" id="ENST00000446160.7">
    <molecule id="A6NFN9-3"/>
    <property type="protein sequence ID" value="ENSP00000387907.1"/>
    <property type="RefSeq nucleotide sequence ID" value="NM_001144960.3"/>
    <property type="RefSeq protein sequence ID" value="NP_001138432.1"/>
</dbReference>
<dbReference type="UCSC" id="uc062oxx.1">
    <molecule id="A6NFN9-2"/>
    <property type="organism name" value="human"/>
</dbReference>
<dbReference type="AGR" id="HGNC:29642"/>
<dbReference type="CTD" id="389161"/>
<dbReference type="DisGeNET" id="389161"/>
<dbReference type="GeneCards" id="ANKUB1"/>
<dbReference type="HGNC" id="HGNC:29642">
    <property type="gene designation" value="ANKUB1"/>
</dbReference>
<dbReference type="HPA" id="ENSG00000206199">
    <property type="expression patterns" value="Tissue enhanced (choroid plexus, fallopian tube)"/>
</dbReference>
<dbReference type="neXtProt" id="NX_A6NFN9"/>
<dbReference type="OpenTargets" id="ENSG00000206199"/>
<dbReference type="PharmGKB" id="PA134863258"/>
<dbReference type="VEuPathDB" id="HostDB:ENSG00000206199"/>
<dbReference type="eggNOG" id="ENOG502QPYP">
    <property type="taxonomic scope" value="Eukaryota"/>
</dbReference>
<dbReference type="GeneTree" id="ENSGT00390000007965"/>
<dbReference type="HOGENOM" id="CLU_543968_0_0_1"/>
<dbReference type="InParanoid" id="A6NFN9"/>
<dbReference type="OMA" id="QGGLTAC"/>
<dbReference type="OrthoDB" id="8856820at2759"/>
<dbReference type="PAN-GO" id="A6NFN9">
    <property type="GO annotations" value="0 GO annotations based on evolutionary models"/>
</dbReference>
<dbReference type="PhylomeDB" id="A6NFN9"/>
<dbReference type="TreeFam" id="TF343343"/>
<dbReference type="PathwayCommons" id="A6NFN9"/>
<dbReference type="BioGRID-ORCS" id="389161">
    <property type="hits" value="3 hits in 262 CRISPR screens"/>
</dbReference>
<dbReference type="ChiTaRS" id="ANKUB1">
    <property type="organism name" value="human"/>
</dbReference>
<dbReference type="GenomeRNAi" id="389161"/>
<dbReference type="Pharos" id="A6NFN9">
    <property type="development level" value="Tdark"/>
</dbReference>
<dbReference type="PRO" id="PR:A6NFN9"/>
<dbReference type="Proteomes" id="UP000005640">
    <property type="component" value="Chromosome 3"/>
</dbReference>
<dbReference type="RNAct" id="A6NFN9">
    <property type="molecule type" value="protein"/>
</dbReference>
<dbReference type="Bgee" id="ENSG00000206199">
    <property type="expression patterns" value="Expressed in olfactory segment of nasal mucosa and 107 other cell types or tissues"/>
</dbReference>
<dbReference type="ExpressionAtlas" id="A6NFN9">
    <property type="expression patterns" value="baseline and differential"/>
</dbReference>
<dbReference type="CDD" id="cd17050">
    <property type="entry name" value="Ubl1_ANKUB1"/>
    <property type="match status" value="1"/>
</dbReference>
<dbReference type="CDD" id="cd17051">
    <property type="entry name" value="Ubl2_ANKUB1"/>
    <property type="match status" value="1"/>
</dbReference>
<dbReference type="Gene3D" id="1.25.40.20">
    <property type="entry name" value="Ankyrin repeat-containing domain"/>
    <property type="match status" value="1"/>
</dbReference>
<dbReference type="Gene3D" id="3.10.20.90">
    <property type="entry name" value="Phosphatidylinositol 3-kinase Catalytic Subunit, Chain A, domain 1"/>
    <property type="match status" value="1"/>
</dbReference>
<dbReference type="InterPro" id="IPR042788">
    <property type="entry name" value="ANKUB1"/>
</dbReference>
<dbReference type="InterPro" id="IPR002110">
    <property type="entry name" value="Ankyrin_rpt"/>
</dbReference>
<dbReference type="InterPro" id="IPR036770">
    <property type="entry name" value="Ankyrin_rpt-contain_sf"/>
</dbReference>
<dbReference type="InterPro" id="IPR000626">
    <property type="entry name" value="Ubiquitin-like_dom"/>
</dbReference>
<dbReference type="InterPro" id="IPR029071">
    <property type="entry name" value="Ubiquitin-like_domsf"/>
</dbReference>
<dbReference type="PANTHER" id="PTHR46885">
    <property type="entry name" value="PROTEIN ANKUB1"/>
    <property type="match status" value="1"/>
</dbReference>
<dbReference type="PANTHER" id="PTHR46885:SF1">
    <property type="entry name" value="PROTEIN ANKUB1"/>
    <property type="match status" value="1"/>
</dbReference>
<dbReference type="Pfam" id="PF13637">
    <property type="entry name" value="Ank_4"/>
    <property type="match status" value="1"/>
</dbReference>
<dbReference type="SMART" id="SM00248">
    <property type="entry name" value="ANK"/>
    <property type="match status" value="3"/>
</dbReference>
<dbReference type="SUPFAM" id="SSF48403">
    <property type="entry name" value="Ankyrin repeat"/>
    <property type="match status" value="1"/>
</dbReference>
<dbReference type="SUPFAM" id="SSF54236">
    <property type="entry name" value="Ubiquitin-like"/>
    <property type="match status" value="1"/>
</dbReference>
<proteinExistence type="evidence at transcript level"/>
<evidence type="ECO:0000305" key="1"/>
<keyword id="KW-0025">Alternative splicing</keyword>
<keyword id="KW-1185">Reference proteome</keyword>